<gene>
    <name type="primary">queD</name>
    <name type="ordered locus">PH1939</name>
</gene>
<feature type="chain" id="PRO_0000057934" description="Putative 6-carboxy-5,6,7,8-tetrahydropterin synthase">
    <location>
        <begin position="1"/>
        <end position="157"/>
    </location>
</feature>
<feature type="active site" description="Proton acceptor" evidence="1">
    <location>
        <position position="31"/>
    </location>
</feature>
<feature type="active site" description="Charge relay system" evidence="1">
    <location>
        <position position="70"/>
    </location>
</feature>
<feature type="active site" description="Charge relay system" evidence="1">
    <location>
        <position position="140"/>
    </location>
</feature>
<feature type="binding site" evidence="1">
    <location>
        <position position="21"/>
    </location>
    <ligand>
        <name>Zn(2+)</name>
        <dbReference type="ChEBI" id="CHEBI:29105"/>
    </ligand>
</feature>
<feature type="binding site" evidence="1">
    <location>
        <position position="35"/>
    </location>
    <ligand>
        <name>Zn(2+)</name>
        <dbReference type="ChEBI" id="CHEBI:29105"/>
    </ligand>
</feature>
<feature type="binding site" evidence="1">
    <location>
        <position position="37"/>
    </location>
    <ligand>
        <name>Zn(2+)</name>
        <dbReference type="ChEBI" id="CHEBI:29105"/>
    </ligand>
</feature>
<protein>
    <recommendedName>
        <fullName>Putative 6-carboxy-5,6,7,8-tetrahydropterin synthase</fullName>
        <shortName>CPH4 synthase</shortName>
        <ecNumber>4.1.2.50</ecNumber>
    </recommendedName>
    <alternativeName>
        <fullName>Archaeosine biosynthesis protein QueD</fullName>
    </alternativeName>
</protein>
<comment type="function">
    <text evidence="1">Catalyzes the conversion of 7,8-dihydroneopterin triphosphate (H2NTP) to 6-carboxy-5,6,7,8-tetrahydropterin (CPH4) and acetaldehyde.</text>
</comment>
<comment type="catalytic activity">
    <reaction>
        <text>7,8-dihydroneopterin 3'-triphosphate + H2O = 6-carboxy-5,6,7,8-tetrahydropterin + triphosphate + acetaldehyde + 2 H(+)</text>
        <dbReference type="Rhea" id="RHEA:27966"/>
        <dbReference type="ChEBI" id="CHEBI:15343"/>
        <dbReference type="ChEBI" id="CHEBI:15377"/>
        <dbReference type="ChEBI" id="CHEBI:15378"/>
        <dbReference type="ChEBI" id="CHEBI:18036"/>
        <dbReference type="ChEBI" id="CHEBI:58462"/>
        <dbReference type="ChEBI" id="CHEBI:61032"/>
        <dbReference type="EC" id="4.1.2.50"/>
    </reaction>
</comment>
<comment type="cofactor">
    <cofactor evidence="1">
        <name>Zn(2+)</name>
        <dbReference type="ChEBI" id="CHEBI:29105"/>
    </cofactor>
    <text evidence="1">Binds 1 zinc ion per subunit.</text>
</comment>
<comment type="pathway">
    <text>Purine metabolism; 7-cyano-7-deazaguanine biosynthesis.</text>
</comment>
<comment type="miscellaneous">
    <text evidence="1">The active site is at the interface between 2 subunits. The proton acceptor Cys is on one subunit, and the charge relay system is on the other subunit (By similarity).</text>
</comment>
<comment type="similarity">
    <text evidence="2">Belongs to the PTPS family. QueD subfamily.</text>
</comment>
<reference key="1">
    <citation type="journal article" date="1998" name="DNA Res.">
        <title>Complete sequence and gene organization of the genome of a hyper-thermophilic archaebacterium, Pyrococcus horikoshii OT3.</title>
        <authorList>
            <person name="Kawarabayasi Y."/>
            <person name="Sawada M."/>
            <person name="Horikawa H."/>
            <person name="Haikawa Y."/>
            <person name="Hino Y."/>
            <person name="Yamamoto S."/>
            <person name="Sekine M."/>
            <person name="Baba S."/>
            <person name="Kosugi H."/>
            <person name="Hosoyama A."/>
            <person name="Nagai Y."/>
            <person name="Sakai M."/>
            <person name="Ogura K."/>
            <person name="Otsuka R."/>
            <person name="Nakazawa H."/>
            <person name="Takamiya M."/>
            <person name="Ohfuku Y."/>
            <person name="Funahashi T."/>
            <person name="Tanaka T."/>
            <person name="Kudoh Y."/>
            <person name="Yamazaki J."/>
            <person name="Kushida N."/>
            <person name="Oguchi A."/>
            <person name="Aoki K."/>
            <person name="Yoshizawa T."/>
            <person name="Nakamura Y."/>
            <person name="Robb F.T."/>
            <person name="Horikoshi K."/>
            <person name="Masuchi Y."/>
            <person name="Shizuya H."/>
            <person name="Kikuchi H."/>
        </authorList>
    </citation>
    <scope>NUCLEOTIDE SEQUENCE [LARGE SCALE GENOMIC DNA]</scope>
    <source>
        <strain>ATCC 700860 / DSM 12428 / JCM 9974 / NBRC 100139 / OT-3</strain>
    </source>
</reference>
<keyword id="KW-0456">Lyase</keyword>
<keyword id="KW-0479">Metal-binding</keyword>
<keyword id="KW-0862">Zinc</keyword>
<sequence length="157" mass="18629">MTMRYIIKRKIYWTKEFDSSHFLELEYESKCKRIHGHTYKVEVEIEGELNEEGMIFDFTHLSEIVKELDHRLIVSKEWVKEVGDLVIIEKNRKILKVPRDEVVIIDKPNVTAEYLAEWFGERIAENAGSNIKKIKVRIWEDPRSYAEVTFTLEPQGS</sequence>
<evidence type="ECO:0000250" key="1"/>
<evidence type="ECO:0000305" key="2"/>
<accession>O59602</accession>
<proteinExistence type="inferred from homology"/>
<organism>
    <name type="scientific">Pyrococcus horikoshii (strain ATCC 700860 / DSM 12428 / JCM 9974 / NBRC 100139 / OT-3)</name>
    <dbReference type="NCBI Taxonomy" id="70601"/>
    <lineage>
        <taxon>Archaea</taxon>
        <taxon>Methanobacteriati</taxon>
        <taxon>Methanobacteriota</taxon>
        <taxon>Thermococci</taxon>
        <taxon>Thermococcales</taxon>
        <taxon>Thermococcaceae</taxon>
        <taxon>Pyrococcus</taxon>
    </lineage>
</organism>
<dbReference type="EC" id="4.1.2.50"/>
<dbReference type="EMBL" id="BA000001">
    <property type="protein sequence ID" value="BAA31066.1"/>
    <property type="molecule type" value="Genomic_DNA"/>
</dbReference>
<dbReference type="PIR" id="C71209">
    <property type="entry name" value="C71209"/>
</dbReference>
<dbReference type="RefSeq" id="WP_010886005.1">
    <property type="nucleotide sequence ID" value="NC_000961.1"/>
</dbReference>
<dbReference type="SMR" id="O59602"/>
<dbReference type="STRING" id="70601.gene:9378952"/>
<dbReference type="EnsemblBacteria" id="BAA31066">
    <property type="protein sequence ID" value="BAA31066"/>
    <property type="gene ID" value="BAA31066"/>
</dbReference>
<dbReference type="GeneID" id="1442787"/>
<dbReference type="KEGG" id="pho:PH1939"/>
<dbReference type="eggNOG" id="arCOG02172">
    <property type="taxonomic scope" value="Archaea"/>
</dbReference>
<dbReference type="OrthoDB" id="6529at2157"/>
<dbReference type="UniPathway" id="UPA00391"/>
<dbReference type="Proteomes" id="UP000000752">
    <property type="component" value="Chromosome"/>
</dbReference>
<dbReference type="GO" id="GO:0070497">
    <property type="term" value="F:6-carboxytetrahydropterin synthase activity"/>
    <property type="evidence" value="ECO:0007669"/>
    <property type="project" value="UniProtKB-EC"/>
</dbReference>
<dbReference type="GO" id="GO:0046872">
    <property type="term" value="F:metal ion binding"/>
    <property type="evidence" value="ECO:0007669"/>
    <property type="project" value="UniProtKB-KW"/>
</dbReference>
<dbReference type="Gene3D" id="3.30.479.10">
    <property type="entry name" value="6-pyruvoyl tetrahydropterin synthase/QueD"/>
    <property type="match status" value="1"/>
</dbReference>
<dbReference type="InterPro" id="IPR007115">
    <property type="entry name" value="6-PTP_synth/QueD"/>
</dbReference>
<dbReference type="InterPro" id="IPR038418">
    <property type="entry name" value="6-PTP_synth/QueD_sf"/>
</dbReference>
<dbReference type="PANTHER" id="PTHR12589:SF7">
    <property type="entry name" value="6-PYRUVOYL TETRAHYDROBIOPTERIN SYNTHASE"/>
    <property type="match status" value="1"/>
</dbReference>
<dbReference type="PANTHER" id="PTHR12589">
    <property type="entry name" value="PYRUVOYL TETRAHYDROBIOPTERIN SYNTHASE"/>
    <property type="match status" value="1"/>
</dbReference>
<dbReference type="Pfam" id="PF01242">
    <property type="entry name" value="PTPS"/>
    <property type="match status" value="1"/>
</dbReference>
<dbReference type="PIRSF" id="PIRSF006113">
    <property type="entry name" value="PTP_synth"/>
    <property type="match status" value="1"/>
</dbReference>
<dbReference type="SUPFAM" id="SSF55620">
    <property type="entry name" value="Tetrahydrobiopterin biosynthesis enzymes-like"/>
    <property type="match status" value="1"/>
</dbReference>
<name>QUED_PYRHO</name>